<name>RPOZ_ECO45</name>
<protein>
    <recommendedName>
        <fullName evidence="1">DNA-directed RNA polymerase subunit omega</fullName>
        <shortName evidence="1">RNAP omega subunit</shortName>
        <ecNumber evidence="1">2.7.7.6</ecNumber>
    </recommendedName>
    <alternativeName>
        <fullName evidence="1">RNA polymerase omega subunit</fullName>
    </alternativeName>
    <alternativeName>
        <fullName evidence="1">Transcriptase subunit omega</fullName>
    </alternativeName>
</protein>
<comment type="function">
    <text evidence="1">Promotes RNA polymerase assembly. Latches the N- and C-terminal regions of the beta' subunit thereby facilitating its interaction with the beta and alpha subunits.</text>
</comment>
<comment type="catalytic activity">
    <reaction evidence="1">
        <text>RNA(n) + a ribonucleoside 5'-triphosphate = RNA(n+1) + diphosphate</text>
        <dbReference type="Rhea" id="RHEA:21248"/>
        <dbReference type="Rhea" id="RHEA-COMP:14527"/>
        <dbReference type="Rhea" id="RHEA-COMP:17342"/>
        <dbReference type="ChEBI" id="CHEBI:33019"/>
        <dbReference type="ChEBI" id="CHEBI:61557"/>
        <dbReference type="ChEBI" id="CHEBI:140395"/>
        <dbReference type="EC" id="2.7.7.6"/>
    </reaction>
</comment>
<comment type="subunit">
    <text evidence="1">The RNAP catalytic core consists of 2 alpha, 1 beta, 1 beta' and 1 omega subunit. When a sigma factor is associated with the core the holoenzyme is formed, which can initiate transcription.</text>
</comment>
<comment type="similarity">
    <text evidence="1">Belongs to the RNA polymerase subunit omega family.</text>
</comment>
<reference key="1">
    <citation type="journal article" date="2009" name="PLoS Genet.">
        <title>Organised genome dynamics in the Escherichia coli species results in highly diverse adaptive paths.</title>
        <authorList>
            <person name="Touchon M."/>
            <person name="Hoede C."/>
            <person name="Tenaillon O."/>
            <person name="Barbe V."/>
            <person name="Baeriswyl S."/>
            <person name="Bidet P."/>
            <person name="Bingen E."/>
            <person name="Bonacorsi S."/>
            <person name="Bouchier C."/>
            <person name="Bouvet O."/>
            <person name="Calteau A."/>
            <person name="Chiapello H."/>
            <person name="Clermont O."/>
            <person name="Cruveiller S."/>
            <person name="Danchin A."/>
            <person name="Diard M."/>
            <person name="Dossat C."/>
            <person name="Karoui M.E."/>
            <person name="Frapy E."/>
            <person name="Garry L."/>
            <person name="Ghigo J.M."/>
            <person name="Gilles A.M."/>
            <person name="Johnson J."/>
            <person name="Le Bouguenec C."/>
            <person name="Lescat M."/>
            <person name="Mangenot S."/>
            <person name="Martinez-Jehanne V."/>
            <person name="Matic I."/>
            <person name="Nassif X."/>
            <person name="Oztas S."/>
            <person name="Petit M.A."/>
            <person name="Pichon C."/>
            <person name="Rouy Z."/>
            <person name="Ruf C.S."/>
            <person name="Schneider D."/>
            <person name="Tourret J."/>
            <person name="Vacherie B."/>
            <person name="Vallenet D."/>
            <person name="Medigue C."/>
            <person name="Rocha E.P.C."/>
            <person name="Denamur E."/>
        </authorList>
    </citation>
    <scope>NUCLEOTIDE SEQUENCE [LARGE SCALE GENOMIC DNA]</scope>
    <source>
        <strain>S88 / ExPEC</strain>
    </source>
</reference>
<proteinExistence type="inferred from homology"/>
<dbReference type="EC" id="2.7.7.6" evidence="1"/>
<dbReference type="EMBL" id="CU928161">
    <property type="protein sequence ID" value="CAR05272.1"/>
    <property type="molecule type" value="Genomic_DNA"/>
</dbReference>
<dbReference type="RefSeq" id="WP_000135058.1">
    <property type="nucleotide sequence ID" value="NC_011742.1"/>
</dbReference>
<dbReference type="EMDB" id="EMD-20286"/>
<dbReference type="EMDB" id="EMD-20287"/>
<dbReference type="EMDB" id="EMD-20288"/>
<dbReference type="EMDB" id="EMD-20394"/>
<dbReference type="EMDB" id="EMD-20395"/>
<dbReference type="EMDB" id="EMD-22184"/>
<dbReference type="EMDB" id="EMD-22185"/>
<dbReference type="EMDB" id="EMD-22234"/>
<dbReference type="EMDB" id="EMD-22245"/>
<dbReference type="EMDB" id="EMD-22247"/>
<dbReference type="EMDB" id="EMD-22248"/>
<dbReference type="EMDB" id="EMD-22249"/>
<dbReference type="EMDB" id="EMD-7014"/>
<dbReference type="EMDB" id="EMD-7015"/>
<dbReference type="EMDB" id="EMD-7016"/>
<dbReference type="EMDB" id="EMD-7059"/>
<dbReference type="EMDB" id="EMD-8585"/>
<dbReference type="SMR" id="B7MFL0"/>
<dbReference type="GeneID" id="98390719"/>
<dbReference type="KEGG" id="ecz:ECS88_4064"/>
<dbReference type="HOGENOM" id="CLU_125406_5_3_6"/>
<dbReference type="Proteomes" id="UP000000747">
    <property type="component" value="Chromosome"/>
</dbReference>
<dbReference type="GO" id="GO:0000428">
    <property type="term" value="C:DNA-directed RNA polymerase complex"/>
    <property type="evidence" value="ECO:0007669"/>
    <property type="project" value="UniProtKB-KW"/>
</dbReference>
<dbReference type="GO" id="GO:0003677">
    <property type="term" value="F:DNA binding"/>
    <property type="evidence" value="ECO:0007669"/>
    <property type="project" value="UniProtKB-UniRule"/>
</dbReference>
<dbReference type="GO" id="GO:0003899">
    <property type="term" value="F:DNA-directed RNA polymerase activity"/>
    <property type="evidence" value="ECO:0007669"/>
    <property type="project" value="UniProtKB-UniRule"/>
</dbReference>
<dbReference type="GO" id="GO:0006351">
    <property type="term" value="P:DNA-templated transcription"/>
    <property type="evidence" value="ECO:0007669"/>
    <property type="project" value="UniProtKB-UniRule"/>
</dbReference>
<dbReference type="FunFam" id="3.90.940.10:FF:000001">
    <property type="entry name" value="DNA-directed RNA polymerase subunit omega"/>
    <property type="match status" value="1"/>
</dbReference>
<dbReference type="Gene3D" id="3.90.940.10">
    <property type="match status" value="1"/>
</dbReference>
<dbReference type="HAMAP" id="MF_00366">
    <property type="entry name" value="RNApol_bact_RpoZ"/>
    <property type="match status" value="1"/>
</dbReference>
<dbReference type="InterPro" id="IPR003716">
    <property type="entry name" value="DNA-dir_RNA_pol_omega"/>
</dbReference>
<dbReference type="InterPro" id="IPR006110">
    <property type="entry name" value="Pol_omega/Rpo6/RPB6"/>
</dbReference>
<dbReference type="InterPro" id="IPR036161">
    <property type="entry name" value="RPB6/omega-like_sf"/>
</dbReference>
<dbReference type="NCBIfam" id="TIGR00690">
    <property type="entry name" value="rpoZ"/>
    <property type="match status" value="1"/>
</dbReference>
<dbReference type="PANTHER" id="PTHR34476">
    <property type="entry name" value="DNA-DIRECTED RNA POLYMERASE SUBUNIT OMEGA"/>
    <property type="match status" value="1"/>
</dbReference>
<dbReference type="PANTHER" id="PTHR34476:SF1">
    <property type="entry name" value="DNA-DIRECTED RNA POLYMERASE SUBUNIT OMEGA"/>
    <property type="match status" value="1"/>
</dbReference>
<dbReference type="Pfam" id="PF01192">
    <property type="entry name" value="RNA_pol_Rpb6"/>
    <property type="match status" value="1"/>
</dbReference>
<dbReference type="SMART" id="SM01409">
    <property type="entry name" value="RNA_pol_Rpb6"/>
    <property type="match status" value="1"/>
</dbReference>
<dbReference type="SUPFAM" id="SSF63562">
    <property type="entry name" value="RPB6/omega subunit-like"/>
    <property type="match status" value="1"/>
</dbReference>
<sequence length="91" mass="10237">MARVTVQDAVEKIGNRFDLVLVAARRARQMQVGGKDPLVPEENDKTTVIALREIEEGLINNQILDVRERQEQQEQEAAELQAVTAIAEGRR</sequence>
<feature type="chain" id="PRO_1000121215" description="DNA-directed RNA polymerase subunit omega">
    <location>
        <begin position="1"/>
        <end position="91"/>
    </location>
</feature>
<evidence type="ECO:0000255" key="1">
    <source>
        <dbReference type="HAMAP-Rule" id="MF_00366"/>
    </source>
</evidence>
<gene>
    <name evidence="1" type="primary">rpoZ</name>
    <name type="ordered locus">ECS88_4064</name>
</gene>
<organism>
    <name type="scientific">Escherichia coli O45:K1 (strain S88 / ExPEC)</name>
    <dbReference type="NCBI Taxonomy" id="585035"/>
    <lineage>
        <taxon>Bacteria</taxon>
        <taxon>Pseudomonadati</taxon>
        <taxon>Pseudomonadota</taxon>
        <taxon>Gammaproteobacteria</taxon>
        <taxon>Enterobacterales</taxon>
        <taxon>Enterobacteriaceae</taxon>
        <taxon>Escherichia</taxon>
    </lineage>
</organism>
<accession>B7MFL0</accession>
<keyword id="KW-0240">DNA-directed RNA polymerase</keyword>
<keyword id="KW-0548">Nucleotidyltransferase</keyword>
<keyword id="KW-1185">Reference proteome</keyword>
<keyword id="KW-0804">Transcription</keyword>
<keyword id="KW-0808">Transferase</keyword>